<accession>B6JLX1</accession>
<comment type="function">
    <text evidence="2">Cell wall formation.</text>
</comment>
<comment type="catalytic activity">
    <reaction evidence="2">
        <text>2 D-alanine + ATP = D-alanyl-D-alanine + ADP + phosphate + H(+)</text>
        <dbReference type="Rhea" id="RHEA:11224"/>
        <dbReference type="ChEBI" id="CHEBI:15378"/>
        <dbReference type="ChEBI" id="CHEBI:30616"/>
        <dbReference type="ChEBI" id="CHEBI:43474"/>
        <dbReference type="ChEBI" id="CHEBI:57416"/>
        <dbReference type="ChEBI" id="CHEBI:57822"/>
        <dbReference type="ChEBI" id="CHEBI:456216"/>
        <dbReference type="EC" id="6.3.2.4"/>
    </reaction>
</comment>
<comment type="cofactor">
    <cofactor evidence="1">
        <name>Mg(2+)</name>
        <dbReference type="ChEBI" id="CHEBI:18420"/>
    </cofactor>
    <cofactor evidence="1">
        <name>Mn(2+)</name>
        <dbReference type="ChEBI" id="CHEBI:29035"/>
    </cofactor>
    <text evidence="1">Binds 2 magnesium or manganese ions per subunit.</text>
</comment>
<comment type="pathway">
    <text evidence="2">Cell wall biogenesis; peptidoglycan biosynthesis.</text>
</comment>
<comment type="subcellular location">
    <subcellularLocation>
        <location evidence="2">Cytoplasm</location>
    </subcellularLocation>
</comment>
<comment type="similarity">
    <text evidence="2">Belongs to the D-alanine--D-alanine ligase family.</text>
</comment>
<gene>
    <name evidence="2" type="primary">ddl</name>
    <name type="ordered locus">HPP12_0747</name>
</gene>
<evidence type="ECO:0000250" key="1"/>
<evidence type="ECO:0000255" key="2">
    <source>
        <dbReference type="HAMAP-Rule" id="MF_00047"/>
    </source>
</evidence>
<keyword id="KW-0067">ATP-binding</keyword>
<keyword id="KW-0133">Cell shape</keyword>
<keyword id="KW-0961">Cell wall biogenesis/degradation</keyword>
<keyword id="KW-0963">Cytoplasm</keyword>
<keyword id="KW-0436">Ligase</keyword>
<keyword id="KW-0460">Magnesium</keyword>
<keyword id="KW-0464">Manganese</keyword>
<keyword id="KW-0479">Metal-binding</keyword>
<keyword id="KW-0547">Nucleotide-binding</keyword>
<keyword id="KW-0573">Peptidoglycan synthesis</keyword>
<protein>
    <recommendedName>
        <fullName evidence="2">D-alanine--D-alanine ligase</fullName>
        <ecNumber evidence="2">6.3.2.4</ecNumber>
    </recommendedName>
    <alternativeName>
        <fullName evidence="2">D-Ala-D-Ala ligase</fullName>
    </alternativeName>
    <alternativeName>
        <fullName evidence="2">D-alanylalanine synthetase</fullName>
    </alternativeName>
</protein>
<reference key="1">
    <citation type="submission" date="2008-10" db="EMBL/GenBank/DDBJ databases">
        <title>The complete genome sequence of Helicobacter pylori strain P12.</title>
        <authorList>
            <person name="Fischer W."/>
            <person name="Windhager L."/>
            <person name="Karnholz A."/>
            <person name="Zeiller M."/>
            <person name="Zimmer R."/>
            <person name="Haas R."/>
        </authorList>
    </citation>
    <scope>NUCLEOTIDE SEQUENCE [LARGE SCALE GENOMIC DNA]</scope>
    <source>
        <strain>P12</strain>
    </source>
</reference>
<sequence>MEFCVLFGGASFEHEISIVSAIALKEVLKDRIKHFIFLDENHHFYLIEASNMHSKYFAQIKEKKLPPLILAHNGLLKNSFLGTKIIELPLVINLVHGGDGEDGKLASLLEFYRIAFIGPRIEASVLSYNKYLTKLYAKDLGVKTLDYVLLNEKNRANALDLIKFNFPFIVKPSNAGSSLGVNVVKEEKELVYALDSAFEYSKEVLIEPFIQGVKEYNLAGCKIKTDFCFSYIEEPNKQEFLDFKQKYLDFSRNKAPKANLSNALEEQLKENFKKLYNDLFSGAIIRCDFFVIENEVYLNEINPIPGSLAHYLFDDFKTTLENLAQSLPKTPKIQVKNSYLLQIQKNK</sequence>
<feature type="chain" id="PRO_1000091185" description="D-alanine--D-alanine ligase">
    <location>
        <begin position="1"/>
        <end position="347"/>
    </location>
</feature>
<feature type="domain" description="ATP-grasp" evidence="2">
    <location>
        <begin position="134"/>
        <end position="332"/>
    </location>
</feature>
<feature type="binding site" evidence="2">
    <location>
        <begin position="161"/>
        <end position="216"/>
    </location>
    <ligand>
        <name>ATP</name>
        <dbReference type="ChEBI" id="CHEBI:30616"/>
    </ligand>
</feature>
<feature type="binding site" evidence="2">
    <location>
        <position position="288"/>
    </location>
    <ligand>
        <name>Mg(2+)</name>
        <dbReference type="ChEBI" id="CHEBI:18420"/>
        <label>1</label>
    </ligand>
</feature>
<feature type="binding site" evidence="2">
    <location>
        <position position="300"/>
    </location>
    <ligand>
        <name>Mg(2+)</name>
        <dbReference type="ChEBI" id="CHEBI:18420"/>
        <label>1</label>
    </ligand>
</feature>
<feature type="binding site" evidence="2">
    <location>
        <position position="300"/>
    </location>
    <ligand>
        <name>Mg(2+)</name>
        <dbReference type="ChEBI" id="CHEBI:18420"/>
        <label>2</label>
    </ligand>
</feature>
<feature type="binding site" evidence="2">
    <location>
        <position position="302"/>
    </location>
    <ligand>
        <name>Mg(2+)</name>
        <dbReference type="ChEBI" id="CHEBI:18420"/>
        <label>2</label>
    </ligand>
</feature>
<organism>
    <name type="scientific">Helicobacter pylori (strain P12)</name>
    <dbReference type="NCBI Taxonomy" id="570508"/>
    <lineage>
        <taxon>Bacteria</taxon>
        <taxon>Pseudomonadati</taxon>
        <taxon>Campylobacterota</taxon>
        <taxon>Epsilonproteobacteria</taxon>
        <taxon>Campylobacterales</taxon>
        <taxon>Helicobacteraceae</taxon>
        <taxon>Helicobacter</taxon>
    </lineage>
</organism>
<name>DDL_HELP2</name>
<proteinExistence type="inferred from homology"/>
<dbReference type="EC" id="6.3.2.4" evidence="2"/>
<dbReference type="EMBL" id="CP001217">
    <property type="protein sequence ID" value="ACJ07899.1"/>
    <property type="molecule type" value="Genomic_DNA"/>
</dbReference>
<dbReference type="SMR" id="B6JLX1"/>
<dbReference type="KEGG" id="hpp:HPP12_0747"/>
<dbReference type="HOGENOM" id="CLU_039268_0_2_7"/>
<dbReference type="UniPathway" id="UPA00219"/>
<dbReference type="Proteomes" id="UP000008198">
    <property type="component" value="Chromosome"/>
</dbReference>
<dbReference type="GO" id="GO:0005737">
    <property type="term" value="C:cytoplasm"/>
    <property type="evidence" value="ECO:0007669"/>
    <property type="project" value="UniProtKB-SubCell"/>
</dbReference>
<dbReference type="GO" id="GO:0005524">
    <property type="term" value="F:ATP binding"/>
    <property type="evidence" value="ECO:0007669"/>
    <property type="project" value="UniProtKB-KW"/>
</dbReference>
<dbReference type="GO" id="GO:0008716">
    <property type="term" value="F:D-alanine-D-alanine ligase activity"/>
    <property type="evidence" value="ECO:0007669"/>
    <property type="project" value="UniProtKB-UniRule"/>
</dbReference>
<dbReference type="GO" id="GO:0046872">
    <property type="term" value="F:metal ion binding"/>
    <property type="evidence" value="ECO:0007669"/>
    <property type="project" value="UniProtKB-KW"/>
</dbReference>
<dbReference type="GO" id="GO:0071555">
    <property type="term" value="P:cell wall organization"/>
    <property type="evidence" value="ECO:0007669"/>
    <property type="project" value="UniProtKB-KW"/>
</dbReference>
<dbReference type="GO" id="GO:0009252">
    <property type="term" value="P:peptidoglycan biosynthetic process"/>
    <property type="evidence" value="ECO:0007669"/>
    <property type="project" value="UniProtKB-UniRule"/>
</dbReference>
<dbReference type="GO" id="GO:0008360">
    <property type="term" value="P:regulation of cell shape"/>
    <property type="evidence" value="ECO:0007669"/>
    <property type="project" value="UniProtKB-KW"/>
</dbReference>
<dbReference type="Gene3D" id="3.40.50.20">
    <property type="match status" value="1"/>
</dbReference>
<dbReference type="Gene3D" id="3.30.1490.20">
    <property type="entry name" value="ATP-grasp fold, A domain"/>
    <property type="match status" value="1"/>
</dbReference>
<dbReference type="Gene3D" id="3.30.470.20">
    <property type="entry name" value="ATP-grasp fold, B domain"/>
    <property type="match status" value="1"/>
</dbReference>
<dbReference type="HAMAP" id="MF_00047">
    <property type="entry name" value="Dala_Dala_lig"/>
    <property type="match status" value="1"/>
</dbReference>
<dbReference type="InterPro" id="IPR011761">
    <property type="entry name" value="ATP-grasp"/>
</dbReference>
<dbReference type="InterPro" id="IPR013815">
    <property type="entry name" value="ATP_grasp_subdomain_1"/>
</dbReference>
<dbReference type="InterPro" id="IPR000291">
    <property type="entry name" value="D-Ala_lig_Van_CS"/>
</dbReference>
<dbReference type="InterPro" id="IPR005905">
    <property type="entry name" value="D_ala_D_ala"/>
</dbReference>
<dbReference type="InterPro" id="IPR011095">
    <property type="entry name" value="Dala_Dala_lig_C"/>
</dbReference>
<dbReference type="InterPro" id="IPR011127">
    <property type="entry name" value="Dala_Dala_lig_N"/>
</dbReference>
<dbReference type="InterPro" id="IPR016185">
    <property type="entry name" value="PreATP-grasp_dom_sf"/>
</dbReference>
<dbReference type="NCBIfam" id="TIGR01205">
    <property type="entry name" value="D_ala_D_alaTIGR"/>
    <property type="match status" value="1"/>
</dbReference>
<dbReference type="NCBIfam" id="NF002527">
    <property type="entry name" value="PRK01966.1-3"/>
    <property type="match status" value="1"/>
</dbReference>
<dbReference type="PANTHER" id="PTHR23132">
    <property type="entry name" value="D-ALANINE--D-ALANINE LIGASE"/>
    <property type="match status" value="1"/>
</dbReference>
<dbReference type="PANTHER" id="PTHR23132:SF23">
    <property type="entry name" value="D-ALANINE--D-ALANINE LIGASE B"/>
    <property type="match status" value="1"/>
</dbReference>
<dbReference type="Pfam" id="PF07478">
    <property type="entry name" value="Dala_Dala_lig_C"/>
    <property type="match status" value="1"/>
</dbReference>
<dbReference type="Pfam" id="PF01820">
    <property type="entry name" value="Dala_Dala_lig_N"/>
    <property type="match status" value="1"/>
</dbReference>
<dbReference type="SUPFAM" id="SSF56059">
    <property type="entry name" value="Glutathione synthetase ATP-binding domain-like"/>
    <property type="match status" value="1"/>
</dbReference>
<dbReference type="SUPFAM" id="SSF52440">
    <property type="entry name" value="PreATP-grasp domain"/>
    <property type="match status" value="1"/>
</dbReference>
<dbReference type="PROSITE" id="PS50975">
    <property type="entry name" value="ATP_GRASP"/>
    <property type="match status" value="1"/>
</dbReference>
<dbReference type="PROSITE" id="PS00843">
    <property type="entry name" value="DALA_DALA_LIGASE_1"/>
    <property type="match status" value="1"/>
</dbReference>
<dbReference type="PROSITE" id="PS00844">
    <property type="entry name" value="DALA_DALA_LIGASE_2"/>
    <property type="match status" value="1"/>
</dbReference>